<keyword id="KW-0328">Glycosyltransferase</keyword>
<keyword id="KW-0804">Transcription</keyword>
<keyword id="KW-0805">Transcription regulation</keyword>
<keyword id="KW-0808">Transferase</keyword>
<proteinExistence type="inferred from homology"/>
<protein>
    <recommendedName>
        <fullName evidence="1">Bifunctional protein PyrR</fullName>
    </recommendedName>
    <domain>
        <recommendedName>
            <fullName evidence="1">Pyrimidine operon regulatory protein</fullName>
        </recommendedName>
    </domain>
    <domain>
        <recommendedName>
            <fullName evidence="1">Uracil phosphoribosyltransferase</fullName>
            <shortName evidence="1">UPRTase</shortName>
            <ecNumber evidence="1">2.4.2.9</ecNumber>
        </recommendedName>
    </domain>
</protein>
<sequence length="168" mass="18067">MSLPNPAALISQMAADLNAHLAQRAISEPRFIGIRTGGVWVAQALLEALGSDSPLGTLDVSFYRDDFSQNGLHPQVRPSELPFEIEGQHLVLIDDVLMSGRTIRAALNELFDYGRPASVTLVCLLDLNAAELPIRPNVVGATLSLAAHERVKLSGPAPLQLELQDLAL</sequence>
<organism>
    <name type="scientific">Pseudomonas fluorescens (strain ATCC BAA-477 / NRRL B-23932 / Pf-5)</name>
    <dbReference type="NCBI Taxonomy" id="220664"/>
    <lineage>
        <taxon>Bacteria</taxon>
        <taxon>Pseudomonadati</taxon>
        <taxon>Pseudomonadota</taxon>
        <taxon>Gammaproteobacteria</taxon>
        <taxon>Pseudomonadales</taxon>
        <taxon>Pseudomonadaceae</taxon>
        <taxon>Pseudomonas</taxon>
    </lineage>
</organism>
<gene>
    <name evidence="1" type="primary">pyrR</name>
    <name type="ordered locus">PFL_5832</name>
</gene>
<dbReference type="EC" id="2.4.2.9" evidence="1"/>
<dbReference type="EMBL" id="CP000076">
    <property type="protein sequence ID" value="AAY95022.1"/>
    <property type="molecule type" value="Genomic_DNA"/>
</dbReference>
<dbReference type="RefSeq" id="WP_011064006.1">
    <property type="nucleotide sequence ID" value="NC_004129.6"/>
</dbReference>
<dbReference type="SMR" id="Q4K4E3"/>
<dbReference type="STRING" id="220664.PFL_5832"/>
<dbReference type="GeneID" id="57478787"/>
<dbReference type="KEGG" id="pfl:PFL_5832"/>
<dbReference type="PATRIC" id="fig|220664.5.peg.5946"/>
<dbReference type="eggNOG" id="COG2065">
    <property type="taxonomic scope" value="Bacteria"/>
</dbReference>
<dbReference type="HOGENOM" id="CLU_094234_1_1_6"/>
<dbReference type="Proteomes" id="UP000008540">
    <property type="component" value="Chromosome"/>
</dbReference>
<dbReference type="GO" id="GO:0004845">
    <property type="term" value="F:uracil phosphoribosyltransferase activity"/>
    <property type="evidence" value="ECO:0007669"/>
    <property type="project" value="UniProtKB-UniRule"/>
</dbReference>
<dbReference type="GO" id="GO:0006355">
    <property type="term" value="P:regulation of DNA-templated transcription"/>
    <property type="evidence" value="ECO:0007669"/>
    <property type="project" value="UniProtKB-UniRule"/>
</dbReference>
<dbReference type="CDD" id="cd06223">
    <property type="entry name" value="PRTases_typeI"/>
    <property type="match status" value="1"/>
</dbReference>
<dbReference type="Gene3D" id="3.40.50.2020">
    <property type="match status" value="1"/>
</dbReference>
<dbReference type="HAMAP" id="MF_01219">
    <property type="entry name" value="PyrR"/>
    <property type="match status" value="1"/>
</dbReference>
<dbReference type="InterPro" id="IPR000836">
    <property type="entry name" value="PRibTrfase_dom"/>
</dbReference>
<dbReference type="InterPro" id="IPR029057">
    <property type="entry name" value="PRTase-like"/>
</dbReference>
<dbReference type="InterPro" id="IPR023050">
    <property type="entry name" value="PyrR"/>
</dbReference>
<dbReference type="InterPro" id="IPR050137">
    <property type="entry name" value="PyrR_bifunctional"/>
</dbReference>
<dbReference type="NCBIfam" id="NF003545">
    <property type="entry name" value="PRK05205.1-1"/>
    <property type="match status" value="1"/>
</dbReference>
<dbReference type="PANTHER" id="PTHR11608">
    <property type="entry name" value="BIFUNCTIONAL PROTEIN PYRR"/>
    <property type="match status" value="1"/>
</dbReference>
<dbReference type="PANTHER" id="PTHR11608:SF0">
    <property type="entry name" value="BIFUNCTIONAL PROTEIN PYRR"/>
    <property type="match status" value="1"/>
</dbReference>
<dbReference type="Pfam" id="PF00156">
    <property type="entry name" value="Pribosyltran"/>
    <property type="match status" value="1"/>
</dbReference>
<dbReference type="SUPFAM" id="SSF53271">
    <property type="entry name" value="PRTase-like"/>
    <property type="match status" value="1"/>
</dbReference>
<comment type="function">
    <text evidence="1">Regulates the transcription of the pyrimidine nucleotide (pyr) operon in response to exogenous pyrimidines.</text>
</comment>
<comment type="function">
    <text evidence="1">Also displays a weak uracil phosphoribosyltransferase activity which is not physiologically significant.</text>
</comment>
<comment type="catalytic activity">
    <reaction evidence="1">
        <text>UMP + diphosphate = 5-phospho-alpha-D-ribose 1-diphosphate + uracil</text>
        <dbReference type="Rhea" id="RHEA:13017"/>
        <dbReference type="ChEBI" id="CHEBI:17568"/>
        <dbReference type="ChEBI" id="CHEBI:33019"/>
        <dbReference type="ChEBI" id="CHEBI:57865"/>
        <dbReference type="ChEBI" id="CHEBI:58017"/>
        <dbReference type="EC" id="2.4.2.9"/>
    </reaction>
</comment>
<comment type="similarity">
    <text evidence="1">Belongs to the purine/pyrimidine phosphoribosyltransferase family. PyrR subfamily.</text>
</comment>
<accession>Q4K4E3</accession>
<evidence type="ECO:0000255" key="1">
    <source>
        <dbReference type="HAMAP-Rule" id="MF_01219"/>
    </source>
</evidence>
<feature type="chain" id="PRO_1000053858" description="Bifunctional protein PyrR">
    <location>
        <begin position="1"/>
        <end position="168"/>
    </location>
</feature>
<feature type="short sequence motif" description="PRPP-binding" evidence="1">
    <location>
        <begin position="90"/>
        <end position="102"/>
    </location>
</feature>
<name>PYRR_PSEF5</name>
<reference key="1">
    <citation type="journal article" date="2005" name="Nat. Biotechnol.">
        <title>Complete genome sequence of the plant commensal Pseudomonas fluorescens Pf-5.</title>
        <authorList>
            <person name="Paulsen I.T."/>
            <person name="Press C.M."/>
            <person name="Ravel J."/>
            <person name="Kobayashi D.Y."/>
            <person name="Myers G.S.A."/>
            <person name="Mavrodi D.V."/>
            <person name="DeBoy R.T."/>
            <person name="Seshadri R."/>
            <person name="Ren Q."/>
            <person name="Madupu R."/>
            <person name="Dodson R.J."/>
            <person name="Durkin A.S."/>
            <person name="Brinkac L.M."/>
            <person name="Daugherty S.C."/>
            <person name="Sullivan S.A."/>
            <person name="Rosovitz M.J."/>
            <person name="Gwinn M.L."/>
            <person name="Zhou L."/>
            <person name="Schneider D.J."/>
            <person name="Cartinhour S.W."/>
            <person name="Nelson W.C."/>
            <person name="Weidman J."/>
            <person name="Watkins K."/>
            <person name="Tran K."/>
            <person name="Khouri H."/>
            <person name="Pierson E.A."/>
            <person name="Pierson L.S. III"/>
            <person name="Thomashow L.S."/>
            <person name="Loper J.E."/>
        </authorList>
    </citation>
    <scope>NUCLEOTIDE SEQUENCE [LARGE SCALE GENOMIC DNA]</scope>
    <source>
        <strain>ATCC BAA-477 / NRRL B-23932 / Pf-5</strain>
    </source>
</reference>